<comment type="function">
    <text evidence="1">Required for the formation of a threonylcarbamoyl group on adenosine at position 37 (t(6)A37) in tRNAs that read codons beginning with adenine. Is involved in the transfer of the threonylcarbamoyl moiety of threonylcarbamoyl-AMP (TC-AMP) to the N6 group of A37, together with TsaE and TsaB. TsaD likely plays a direct catalytic role in this reaction.</text>
</comment>
<comment type="catalytic activity">
    <reaction evidence="1">
        <text>L-threonylcarbamoyladenylate + adenosine(37) in tRNA = N(6)-L-threonylcarbamoyladenosine(37) in tRNA + AMP + H(+)</text>
        <dbReference type="Rhea" id="RHEA:37059"/>
        <dbReference type="Rhea" id="RHEA-COMP:10162"/>
        <dbReference type="Rhea" id="RHEA-COMP:10163"/>
        <dbReference type="ChEBI" id="CHEBI:15378"/>
        <dbReference type="ChEBI" id="CHEBI:73682"/>
        <dbReference type="ChEBI" id="CHEBI:74411"/>
        <dbReference type="ChEBI" id="CHEBI:74418"/>
        <dbReference type="ChEBI" id="CHEBI:456215"/>
        <dbReference type="EC" id="2.3.1.234"/>
    </reaction>
</comment>
<comment type="cofactor">
    <cofactor evidence="1">
        <name>Fe(2+)</name>
        <dbReference type="ChEBI" id="CHEBI:29033"/>
    </cofactor>
    <text evidence="1">Binds 1 Fe(2+) ion per subunit.</text>
</comment>
<comment type="subcellular location">
    <subcellularLocation>
        <location evidence="1">Cytoplasm</location>
    </subcellularLocation>
</comment>
<comment type="similarity">
    <text evidence="1">Belongs to the KAE1 / TsaD family.</text>
</comment>
<sequence length="340" mass="37799">MILSIESSCDDSSLALTRIEDAQLIAHFKISQEKHHSSYGGVVPELASRLHAENLPLLLERIKISLNKDFSKIKAIAITNQPGLSVTLIEGLMMAKALSLSLNLPLILEDHLRGHVYSLFINEKQTCMPLSVLLVSGGHSLILEARDYENIKIVATSLDDSFGESFDKVSKMLDLGYPGGPIVEKLALDYRHPNEPLMFPIPLKNSPNLAFSFSGLKNAVRLEVEKNAPNLNEAIKQKIGYHFQSAAIEHLIQQTKRYFKIKRPKIFGIVGGASQNLALRKAFENLCDAFDCKLVLAPLEFCSDNAAMIGRSSLEAYQKKRFVPLEKANISPRTLLKSFE</sequence>
<name>TSAD_HELPY</name>
<gene>
    <name evidence="1" type="primary">tsaD</name>
    <name type="synonym">gcp</name>
    <name type="ordered locus">HP_1584</name>
</gene>
<organism>
    <name type="scientific">Helicobacter pylori (strain ATCC 700392 / 26695)</name>
    <name type="common">Campylobacter pylori</name>
    <dbReference type="NCBI Taxonomy" id="85962"/>
    <lineage>
        <taxon>Bacteria</taxon>
        <taxon>Pseudomonadati</taxon>
        <taxon>Campylobacterota</taxon>
        <taxon>Epsilonproteobacteria</taxon>
        <taxon>Campylobacterales</taxon>
        <taxon>Helicobacteraceae</taxon>
        <taxon>Helicobacter</taxon>
    </lineage>
</organism>
<keyword id="KW-0012">Acyltransferase</keyword>
<keyword id="KW-0963">Cytoplasm</keyword>
<keyword id="KW-0408">Iron</keyword>
<keyword id="KW-0479">Metal-binding</keyword>
<keyword id="KW-1185">Reference proteome</keyword>
<keyword id="KW-0808">Transferase</keyword>
<keyword id="KW-0819">tRNA processing</keyword>
<protein>
    <recommendedName>
        <fullName evidence="1">tRNA N6-adenosine threonylcarbamoyltransferase</fullName>
        <ecNumber evidence="1">2.3.1.234</ecNumber>
    </recommendedName>
    <alternativeName>
        <fullName evidence="1">N6-L-threonylcarbamoyladenine synthase</fullName>
        <shortName evidence="1">t(6)A synthase</shortName>
    </alternativeName>
    <alternativeName>
        <fullName evidence="1">t(6)A37 threonylcarbamoyladenosine biosynthesis protein TsaD</fullName>
    </alternativeName>
    <alternativeName>
        <fullName evidence="1">tRNA threonylcarbamoyladenosine biosynthesis protein TsaD</fullName>
    </alternativeName>
</protein>
<dbReference type="EC" id="2.3.1.234" evidence="1"/>
<dbReference type="EMBL" id="AE000511">
    <property type="protein sequence ID" value="AAD08622.1"/>
    <property type="molecule type" value="Genomic_DNA"/>
</dbReference>
<dbReference type="PIR" id="H64717">
    <property type="entry name" value="H64717"/>
</dbReference>
<dbReference type="RefSeq" id="NP_208375.1">
    <property type="nucleotide sequence ID" value="NC_000915.1"/>
</dbReference>
<dbReference type="RefSeq" id="WP_000603684.1">
    <property type="nucleotide sequence ID" value="NC_018939.1"/>
</dbReference>
<dbReference type="SMR" id="P55996"/>
<dbReference type="FunCoup" id="P55996">
    <property type="interactions" value="355"/>
</dbReference>
<dbReference type="IntAct" id="P55996">
    <property type="interactions" value="1"/>
</dbReference>
<dbReference type="STRING" id="85962.HP_1584"/>
<dbReference type="PaxDb" id="85962-C694_08205"/>
<dbReference type="EnsemblBacteria" id="AAD08622">
    <property type="protein sequence ID" value="AAD08622"/>
    <property type="gene ID" value="HP_1584"/>
</dbReference>
<dbReference type="KEGG" id="heo:C694_08205"/>
<dbReference type="KEGG" id="hpy:HP_1584"/>
<dbReference type="PATRIC" id="fig|85962.47.peg.1702"/>
<dbReference type="eggNOG" id="COG0533">
    <property type="taxonomic scope" value="Bacteria"/>
</dbReference>
<dbReference type="InParanoid" id="P55996"/>
<dbReference type="OrthoDB" id="9806197at2"/>
<dbReference type="PhylomeDB" id="P55996"/>
<dbReference type="Proteomes" id="UP000000429">
    <property type="component" value="Chromosome"/>
</dbReference>
<dbReference type="GO" id="GO:0005737">
    <property type="term" value="C:cytoplasm"/>
    <property type="evidence" value="ECO:0007669"/>
    <property type="project" value="UniProtKB-SubCell"/>
</dbReference>
<dbReference type="GO" id="GO:0005506">
    <property type="term" value="F:iron ion binding"/>
    <property type="evidence" value="ECO:0007669"/>
    <property type="project" value="UniProtKB-UniRule"/>
</dbReference>
<dbReference type="GO" id="GO:0061711">
    <property type="term" value="F:N(6)-L-threonylcarbamoyladenine synthase activity"/>
    <property type="evidence" value="ECO:0007669"/>
    <property type="project" value="UniProtKB-EC"/>
</dbReference>
<dbReference type="GO" id="GO:0002949">
    <property type="term" value="P:tRNA threonylcarbamoyladenosine modification"/>
    <property type="evidence" value="ECO:0007669"/>
    <property type="project" value="UniProtKB-UniRule"/>
</dbReference>
<dbReference type="FunFam" id="3.30.420.40:FF:000359">
    <property type="entry name" value="tRNA N6-adenosine threonylcarbamoyltransferase"/>
    <property type="match status" value="1"/>
</dbReference>
<dbReference type="Gene3D" id="3.30.420.40">
    <property type="match status" value="2"/>
</dbReference>
<dbReference type="HAMAP" id="MF_01445">
    <property type="entry name" value="TsaD"/>
    <property type="match status" value="1"/>
</dbReference>
<dbReference type="InterPro" id="IPR043129">
    <property type="entry name" value="ATPase_NBD"/>
</dbReference>
<dbReference type="InterPro" id="IPR000905">
    <property type="entry name" value="Gcp-like_dom"/>
</dbReference>
<dbReference type="InterPro" id="IPR017861">
    <property type="entry name" value="KAE1/TsaD"/>
</dbReference>
<dbReference type="InterPro" id="IPR017860">
    <property type="entry name" value="Peptidase_M22_CS"/>
</dbReference>
<dbReference type="InterPro" id="IPR022450">
    <property type="entry name" value="TsaD"/>
</dbReference>
<dbReference type="NCBIfam" id="TIGR00329">
    <property type="entry name" value="gcp_kae1"/>
    <property type="match status" value="1"/>
</dbReference>
<dbReference type="NCBIfam" id="TIGR03723">
    <property type="entry name" value="T6A_TsaD_YgjD"/>
    <property type="match status" value="1"/>
</dbReference>
<dbReference type="PANTHER" id="PTHR11735">
    <property type="entry name" value="TRNA N6-ADENOSINE THREONYLCARBAMOYLTRANSFERASE"/>
    <property type="match status" value="1"/>
</dbReference>
<dbReference type="PANTHER" id="PTHR11735:SF6">
    <property type="entry name" value="TRNA N6-ADENOSINE THREONYLCARBAMOYLTRANSFERASE, MITOCHONDRIAL"/>
    <property type="match status" value="1"/>
</dbReference>
<dbReference type="Pfam" id="PF00814">
    <property type="entry name" value="TsaD"/>
    <property type="match status" value="1"/>
</dbReference>
<dbReference type="PRINTS" id="PR00789">
    <property type="entry name" value="OSIALOPTASE"/>
</dbReference>
<dbReference type="SUPFAM" id="SSF53067">
    <property type="entry name" value="Actin-like ATPase domain"/>
    <property type="match status" value="1"/>
</dbReference>
<dbReference type="PROSITE" id="PS01016">
    <property type="entry name" value="GLYCOPROTEASE"/>
    <property type="match status" value="1"/>
</dbReference>
<proteinExistence type="inferred from homology"/>
<evidence type="ECO:0000255" key="1">
    <source>
        <dbReference type="HAMAP-Rule" id="MF_01445"/>
    </source>
</evidence>
<accession>P55996</accession>
<reference key="1">
    <citation type="journal article" date="1997" name="Nature">
        <title>The complete genome sequence of the gastric pathogen Helicobacter pylori.</title>
        <authorList>
            <person name="Tomb J.-F."/>
            <person name="White O."/>
            <person name="Kerlavage A.R."/>
            <person name="Clayton R.A."/>
            <person name="Sutton G.G."/>
            <person name="Fleischmann R.D."/>
            <person name="Ketchum K.A."/>
            <person name="Klenk H.-P."/>
            <person name="Gill S.R."/>
            <person name="Dougherty B.A."/>
            <person name="Nelson K.E."/>
            <person name="Quackenbush J."/>
            <person name="Zhou L."/>
            <person name="Kirkness E.F."/>
            <person name="Peterson S.N."/>
            <person name="Loftus B.J."/>
            <person name="Richardson D.L."/>
            <person name="Dodson R.J."/>
            <person name="Khalak H.G."/>
            <person name="Glodek A."/>
            <person name="McKenney K."/>
            <person name="FitzGerald L.M."/>
            <person name="Lee N."/>
            <person name="Adams M.D."/>
            <person name="Hickey E.K."/>
            <person name="Berg D.E."/>
            <person name="Gocayne J.D."/>
            <person name="Utterback T.R."/>
            <person name="Peterson J.D."/>
            <person name="Kelley J.M."/>
            <person name="Cotton M.D."/>
            <person name="Weidman J.F."/>
            <person name="Fujii C."/>
            <person name="Bowman C."/>
            <person name="Watthey L."/>
            <person name="Wallin E."/>
            <person name="Hayes W.S."/>
            <person name="Borodovsky M."/>
            <person name="Karp P.D."/>
            <person name="Smith H.O."/>
            <person name="Fraser C.M."/>
            <person name="Venter J.C."/>
        </authorList>
    </citation>
    <scope>NUCLEOTIDE SEQUENCE [LARGE SCALE GENOMIC DNA]</scope>
    <source>
        <strain>ATCC 700392 / 26695</strain>
    </source>
</reference>
<feature type="chain" id="PRO_0000096965" description="tRNA N6-adenosine threonylcarbamoyltransferase">
    <location>
        <begin position="1"/>
        <end position="340"/>
    </location>
</feature>
<feature type="binding site" evidence="1">
    <location>
        <position position="111"/>
    </location>
    <ligand>
        <name>Fe cation</name>
        <dbReference type="ChEBI" id="CHEBI:24875"/>
    </ligand>
</feature>
<feature type="binding site" evidence="1">
    <location>
        <position position="115"/>
    </location>
    <ligand>
        <name>Fe cation</name>
        <dbReference type="ChEBI" id="CHEBI:24875"/>
    </ligand>
</feature>
<feature type="binding site" evidence="1">
    <location>
        <begin position="134"/>
        <end position="138"/>
    </location>
    <ligand>
        <name>substrate</name>
    </ligand>
</feature>
<feature type="binding site" evidence="1">
    <location>
        <position position="167"/>
    </location>
    <ligand>
        <name>substrate</name>
    </ligand>
</feature>
<feature type="binding site" evidence="1">
    <location>
        <position position="180"/>
    </location>
    <ligand>
        <name>substrate</name>
    </ligand>
</feature>
<feature type="binding site" evidence="1">
    <location>
        <position position="276"/>
    </location>
    <ligand>
        <name>substrate</name>
    </ligand>
</feature>
<feature type="binding site" evidence="1">
    <location>
        <position position="304"/>
    </location>
    <ligand>
        <name>Fe cation</name>
        <dbReference type="ChEBI" id="CHEBI:24875"/>
    </ligand>
</feature>